<protein>
    <recommendedName>
        <fullName evidence="1">CCA-adding enzyme</fullName>
        <ecNumber evidence="1">2.7.7.72</ecNumber>
    </recommendedName>
    <alternativeName>
        <fullName evidence="1">CCA tRNA nucleotidyltransferase</fullName>
    </alternativeName>
    <alternativeName>
        <fullName evidence="1">tRNA CCA-pyrophosphorylase</fullName>
    </alternativeName>
    <alternativeName>
        <fullName evidence="1">tRNA adenylyl-/cytidylyl- transferase</fullName>
    </alternativeName>
    <alternativeName>
        <fullName evidence="1">tRNA nucleotidyltransferase</fullName>
    </alternativeName>
    <alternativeName>
        <fullName evidence="1">tRNA-NT</fullName>
    </alternativeName>
</protein>
<proteinExistence type="inferred from homology"/>
<organism>
    <name type="scientific">Bacillus pumilus (strain SAFR-032)</name>
    <dbReference type="NCBI Taxonomy" id="315750"/>
    <lineage>
        <taxon>Bacteria</taxon>
        <taxon>Bacillati</taxon>
        <taxon>Bacillota</taxon>
        <taxon>Bacilli</taxon>
        <taxon>Bacillales</taxon>
        <taxon>Bacillaceae</taxon>
        <taxon>Bacillus</taxon>
    </lineage>
</organism>
<evidence type="ECO:0000255" key="1">
    <source>
        <dbReference type="HAMAP-Rule" id="MF_01263"/>
    </source>
</evidence>
<accession>A8FEH9</accession>
<feature type="chain" id="PRO_1000067290" description="CCA-adding enzyme">
    <location>
        <begin position="1"/>
        <end position="400"/>
    </location>
</feature>
<feature type="binding site" evidence="1">
    <location>
        <position position="27"/>
    </location>
    <ligand>
        <name>ATP</name>
        <dbReference type="ChEBI" id="CHEBI:30616"/>
    </ligand>
</feature>
<feature type="binding site" evidence="1">
    <location>
        <position position="27"/>
    </location>
    <ligand>
        <name>CTP</name>
        <dbReference type="ChEBI" id="CHEBI:37563"/>
    </ligand>
</feature>
<feature type="binding site" evidence="1">
    <location>
        <position position="30"/>
    </location>
    <ligand>
        <name>ATP</name>
        <dbReference type="ChEBI" id="CHEBI:30616"/>
    </ligand>
</feature>
<feature type="binding site" evidence="1">
    <location>
        <position position="30"/>
    </location>
    <ligand>
        <name>CTP</name>
        <dbReference type="ChEBI" id="CHEBI:37563"/>
    </ligand>
</feature>
<feature type="binding site" evidence="1">
    <location>
        <position position="40"/>
    </location>
    <ligand>
        <name>Mg(2+)</name>
        <dbReference type="ChEBI" id="CHEBI:18420"/>
    </ligand>
</feature>
<feature type="binding site" evidence="1">
    <location>
        <position position="42"/>
    </location>
    <ligand>
        <name>Mg(2+)</name>
        <dbReference type="ChEBI" id="CHEBI:18420"/>
    </ligand>
</feature>
<feature type="binding site" evidence="1">
    <location>
        <position position="111"/>
    </location>
    <ligand>
        <name>ATP</name>
        <dbReference type="ChEBI" id="CHEBI:30616"/>
    </ligand>
</feature>
<feature type="binding site" evidence="1">
    <location>
        <position position="111"/>
    </location>
    <ligand>
        <name>CTP</name>
        <dbReference type="ChEBI" id="CHEBI:37563"/>
    </ligand>
</feature>
<feature type="binding site" evidence="1">
    <location>
        <position position="154"/>
    </location>
    <ligand>
        <name>ATP</name>
        <dbReference type="ChEBI" id="CHEBI:30616"/>
    </ligand>
</feature>
<feature type="binding site" evidence="1">
    <location>
        <position position="154"/>
    </location>
    <ligand>
        <name>CTP</name>
        <dbReference type="ChEBI" id="CHEBI:37563"/>
    </ligand>
</feature>
<feature type="binding site" evidence="1">
    <location>
        <position position="157"/>
    </location>
    <ligand>
        <name>ATP</name>
        <dbReference type="ChEBI" id="CHEBI:30616"/>
    </ligand>
</feature>
<feature type="binding site" evidence="1">
    <location>
        <position position="157"/>
    </location>
    <ligand>
        <name>CTP</name>
        <dbReference type="ChEBI" id="CHEBI:37563"/>
    </ligand>
</feature>
<feature type="binding site" evidence="1">
    <location>
        <position position="160"/>
    </location>
    <ligand>
        <name>ATP</name>
        <dbReference type="ChEBI" id="CHEBI:30616"/>
    </ligand>
</feature>
<feature type="binding site" evidence="1">
    <location>
        <position position="160"/>
    </location>
    <ligand>
        <name>CTP</name>
        <dbReference type="ChEBI" id="CHEBI:37563"/>
    </ligand>
</feature>
<feature type="binding site" evidence="1">
    <location>
        <position position="163"/>
    </location>
    <ligand>
        <name>ATP</name>
        <dbReference type="ChEBI" id="CHEBI:30616"/>
    </ligand>
</feature>
<feature type="binding site" evidence="1">
    <location>
        <position position="163"/>
    </location>
    <ligand>
        <name>CTP</name>
        <dbReference type="ChEBI" id="CHEBI:37563"/>
    </ligand>
</feature>
<reference key="1">
    <citation type="journal article" date="2007" name="PLoS ONE">
        <title>Paradoxical DNA repair and peroxide resistance gene conservation in Bacillus pumilus SAFR-032.</title>
        <authorList>
            <person name="Gioia J."/>
            <person name="Yerrapragada S."/>
            <person name="Qin X."/>
            <person name="Jiang H."/>
            <person name="Igboeli O.C."/>
            <person name="Muzny D."/>
            <person name="Dugan-Rocha S."/>
            <person name="Ding Y."/>
            <person name="Hawes A."/>
            <person name="Liu W."/>
            <person name="Perez L."/>
            <person name="Kovar C."/>
            <person name="Dinh H."/>
            <person name="Lee S."/>
            <person name="Nazareth L."/>
            <person name="Blyth P."/>
            <person name="Holder M."/>
            <person name="Buhay C."/>
            <person name="Tirumalai M.R."/>
            <person name="Liu Y."/>
            <person name="Dasgupta I."/>
            <person name="Bokhetache L."/>
            <person name="Fujita M."/>
            <person name="Karouia F."/>
            <person name="Eswara Moorthy P."/>
            <person name="Siefert J."/>
            <person name="Uzman A."/>
            <person name="Buzumbo P."/>
            <person name="Verma A."/>
            <person name="Zwiya H."/>
            <person name="McWilliams B.D."/>
            <person name="Olowu A."/>
            <person name="Clinkenbeard K.D."/>
            <person name="Newcombe D."/>
            <person name="Golebiewski L."/>
            <person name="Petrosino J.F."/>
            <person name="Nicholson W.L."/>
            <person name="Fox G.E."/>
            <person name="Venkateswaran K."/>
            <person name="Highlander S.K."/>
            <person name="Weinstock G.M."/>
        </authorList>
    </citation>
    <scope>NUCLEOTIDE SEQUENCE [LARGE SCALE GENOMIC DNA]</scope>
    <source>
        <strain>SAFR-032</strain>
    </source>
</reference>
<comment type="function">
    <text evidence="1">Catalyzes the addition and repair of the essential 3'-terminal CCA sequence in tRNAs without using a nucleic acid template. Adds these three nucleotides in the order of C, C, and A to the tRNA nucleotide-73, using CTP and ATP as substrates and producing inorganic pyrophosphate. tRNA 3'-terminal CCA addition is required both for tRNA processing and repair. Also involved in tRNA surveillance by mediating tandem CCA addition to generate a CCACCA at the 3' terminus of unstable tRNAs. While stable tRNAs receive only 3'-terminal CCA, unstable tRNAs are marked with CCACCA and rapidly degraded.</text>
</comment>
<comment type="catalytic activity">
    <reaction evidence="1">
        <text>a tRNA precursor + 2 CTP + ATP = a tRNA with a 3' CCA end + 3 diphosphate</text>
        <dbReference type="Rhea" id="RHEA:14433"/>
        <dbReference type="Rhea" id="RHEA-COMP:10465"/>
        <dbReference type="Rhea" id="RHEA-COMP:10468"/>
        <dbReference type="ChEBI" id="CHEBI:30616"/>
        <dbReference type="ChEBI" id="CHEBI:33019"/>
        <dbReference type="ChEBI" id="CHEBI:37563"/>
        <dbReference type="ChEBI" id="CHEBI:74896"/>
        <dbReference type="ChEBI" id="CHEBI:83071"/>
        <dbReference type="EC" id="2.7.7.72"/>
    </reaction>
</comment>
<comment type="catalytic activity">
    <reaction evidence="1">
        <text>a tRNA with a 3' CCA end + 2 CTP + ATP = a tRNA with a 3' CCACCA end + 3 diphosphate</text>
        <dbReference type="Rhea" id="RHEA:76235"/>
        <dbReference type="Rhea" id="RHEA-COMP:10468"/>
        <dbReference type="Rhea" id="RHEA-COMP:18655"/>
        <dbReference type="ChEBI" id="CHEBI:30616"/>
        <dbReference type="ChEBI" id="CHEBI:33019"/>
        <dbReference type="ChEBI" id="CHEBI:37563"/>
        <dbReference type="ChEBI" id="CHEBI:83071"/>
        <dbReference type="ChEBI" id="CHEBI:195187"/>
    </reaction>
    <physiologicalReaction direction="left-to-right" evidence="1">
        <dbReference type="Rhea" id="RHEA:76236"/>
    </physiologicalReaction>
</comment>
<comment type="cofactor">
    <cofactor evidence="1">
        <name>Mg(2+)</name>
        <dbReference type="ChEBI" id="CHEBI:18420"/>
    </cofactor>
</comment>
<comment type="subunit">
    <text evidence="1">Homodimer.</text>
</comment>
<comment type="miscellaneous">
    <text evidence="1">A single active site specifically recognizes both ATP and CTP and is responsible for their addition.</text>
</comment>
<comment type="similarity">
    <text evidence="1">Belongs to the tRNA nucleotidyltransferase/poly(A) polymerase family. Bacterial CCA-adding enzyme type 3 subfamily.</text>
</comment>
<dbReference type="EC" id="2.7.7.72" evidence="1"/>
<dbReference type="EMBL" id="CP000813">
    <property type="protein sequence ID" value="ABV62646.1"/>
    <property type="molecule type" value="Genomic_DNA"/>
</dbReference>
<dbReference type="RefSeq" id="WP_012010360.1">
    <property type="nucleotide sequence ID" value="NC_009848.4"/>
</dbReference>
<dbReference type="SMR" id="A8FEH9"/>
<dbReference type="STRING" id="315750.BPUM_1976"/>
<dbReference type="GeneID" id="5621242"/>
<dbReference type="KEGG" id="bpu:BPUM_1976"/>
<dbReference type="eggNOG" id="COG0617">
    <property type="taxonomic scope" value="Bacteria"/>
</dbReference>
<dbReference type="HOGENOM" id="CLU_015961_3_0_9"/>
<dbReference type="OrthoDB" id="9805698at2"/>
<dbReference type="Proteomes" id="UP000001355">
    <property type="component" value="Chromosome"/>
</dbReference>
<dbReference type="GO" id="GO:0005524">
    <property type="term" value="F:ATP binding"/>
    <property type="evidence" value="ECO:0007669"/>
    <property type="project" value="UniProtKB-UniRule"/>
</dbReference>
<dbReference type="GO" id="GO:0004810">
    <property type="term" value="F:CCA tRNA nucleotidyltransferase activity"/>
    <property type="evidence" value="ECO:0007669"/>
    <property type="project" value="UniProtKB-UniRule"/>
</dbReference>
<dbReference type="GO" id="GO:0000287">
    <property type="term" value="F:magnesium ion binding"/>
    <property type="evidence" value="ECO:0007669"/>
    <property type="project" value="UniProtKB-UniRule"/>
</dbReference>
<dbReference type="GO" id="GO:0000049">
    <property type="term" value="F:tRNA binding"/>
    <property type="evidence" value="ECO:0007669"/>
    <property type="project" value="UniProtKB-UniRule"/>
</dbReference>
<dbReference type="GO" id="GO:0042245">
    <property type="term" value="P:RNA repair"/>
    <property type="evidence" value="ECO:0007669"/>
    <property type="project" value="UniProtKB-KW"/>
</dbReference>
<dbReference type="GO" id="GO:0001680">
    <property type="term" value="P:tRNA 3'-terminal CCA addition"/>
    <property type="evidence" value="ECO:0007669"/>
    <property type="project" value="UniProtKB-UniRule"/>
</dbReference>
<dbReference type="CDD" id="cd05398">
    <property type="entry name" value="NT_ClassII-CCAase"/>
    <property type="match status" value="1"/>
</dbReference>
<dbReference type="Gene3D" id="1.10.110.30">
    <property type="match status" value="1"/>
</dbReference>
<dbReference type="Gene3D" id="1.10.246.80">
    <property type="match status" value="1"/>
</dbReference>
<dbReference type="Gene3D" id="1.20.58.560">
    <property type="match status" value="1"/>
</dbReference>
<dbReference type="Gene3D" id="3.30.460.10">
    <property type="entry name" value="Beta Polymerase, domain 2"/>
    <property type="match status" value="1"/>
</dbReference>
<dbReference type="HAMAP" id="MF_01263">
    <property type="entry name" value="CCA_bact_type3"/>
    <property type="match status" value="1"/>
</dbReference>
<dbReference type="InterPro" id="IPR050264">
    <property type="entry name" value="Bact_CCA-adding_enz_type3_sf"/>
</dbReference>
<dbReference type="InterPro" id="IPR032810">
    <property type="entry name" value="CCA-adding_enz_C"/>
</dbReference>
<dbReference type="InterPro" id="IPR023068">
    <property type="entry name" value="CCA-adding_enz_firmicutes"/>
</dbReference>
<dbReference type="InterPro" id="IPR043519">
    <property type="entry name" value="NT_sf"/>
</dbReference>
<dbReference type="InterPro" id="IPR002646">
    <property type="entry name" value="PolA_pol_head_dom"/>
</dbReference>
<dbReference type="InterPro" id="IPR032828">
    <property type="entry name" value="PolyA_RNA-bd"/>
</dbReference>
<dbReference type="NCBIfam" id="NF009814">
    <property type="entry name" value="PRK13299.1"/>
    <property type="match status" value="1"/>
</dbReference>
<dbReference type="PANTHER" id="PTHR46173">
    <property type="entry name" value="CCA TRNA NUCLEOTIDYLTRANSFERASE 1, MITOCHONDRIAL"/>
    <property type="match status" value="1"/>
</dbReference>
<dbReference type="PANTHER" id="PTHR46173:SF1">
    <property type="entry name" value="CCA TRNA NUCLEOTIDYLTRANSFERASE 1, MITOCHONDRIAL"/>
    <property type="match status" value="1"/>
</dbReference>
<dbReference type="Pfam" id="PF01743">
    <property type="entry name" value="PolyA_pol"/>
    <property type="match status" value="1"/>
</dbReference>
<dbReference type="Pfam" id="PF12627">
    <property type="entry name" value="PolyA_pol_RNAbd"/>
    <property type="match status" value="1"/>
</dbReference>
<dbReference type="Pfam" id="PF13735">
    <property type="entry name" value="tRNA_NucTran2_2"/>
    <property type="match status" value="1"/>
</dbReference>
<dbReference type="SUPFAM" id="SSF81301">
    <property type="entry name" value="Nucleotidyltransferase"/>
    <property type="match status" value="1"/>
</dbReference>
<dbReference type="SUPFAM" id="SSF81891">
    <property type="entry name" value="Poly A polymerase C-terminal region-like"/>
    <property type="match status" value="1"/>
</dbReference>
<gene>
    <name evidence="1" type="primary">cca</name>
    <name type="ordered locus">BPUM_1976</name>
</gene>
<name>CCA_BACP2</name>
<sequence>MNEPFTHAIPILHTLHEHGYQAYFVGGAVRDVLLGREIGDIDIATDATPDTVESLFEKTVDVGKEHGTVIVLHDGMSYEVTTFRTESEYEDFRRPKEVAFITSLKEDLLRRDLTINAMAMDINGEIIDHVGGKQDIERKRIQTVGDPACRFQEDALRMMRAIRFLSQLGFELAAETAEAMEKDKHLLANISVERKKIEMEKLLKGRYCERAIKVLISTKLYEELPGLEKDRLQDSFQTFPYYLLDGLEEVWGAVIHLLGLDEEKAVLFLKEWKLSTKLLKDAVAISRYVDCEWNAEKMFEAGEHVLLSSLKITQLKHERRIFFDELEAAKSSYDALPIKTLQDLAVSGKDLMAFRQKTSGKWIAEELDLVKKAVLHNHLENRKEAIEEWLTACDQQLEND</sequence>
<keyword id="KW-0067">ATP-binding</keyword>
<keyword id="KW-0460">Magnesium</keyword>
<keyword id="KW-0479">Metal-binding</keyword>
<keyword id="KW-0547">Nucleotide-binding</keyword>
<keyword id="KW-0548">Nucleotidyltransferase</keyword>
<keyword id="KW-0692">RNA repair</keyword>
<keyword id="KW-0694">RNA-binding</keyword>
<keyword id="KW-0808">Transferase</keyword>
<keyword id="KW-0819">tRNA processing</keyword>